<protein>
    <recommendedName>
        <fullName evidence="1">Carbamoyl phosphate synthase large chain</fullName>
        <ecNumber evidence="1">6.3.4.16</ecNumber>
        <ecNumber evidence="1">6.3.5.5</ecNumber>
    </recommendedName>
    <alternativeName>
        <fullName evidence="1">Carbamoyl phosphate synthetase ammonia chain</fullName>
    </alternativeName>
</protein>
<organism>
    <name type="scientific">Streptococcus pneumoniae (strain P1031)</name>
    <dbReference type="NCBI Taxonomy" id="488223"/>
    <lineage>
        <taxon>Bacteria</taxon>
        <taxon>Bacillati</taxon>
        <taxon>Bacillota</taxon>
        <taxon>Bacilli</taxon>
        <taxon>Lactobacillales</taxon>
        <taxon>Streptococcaceae</taxon>
        <taxon>Streptococcus</taxon>
    </lineage>
</organism>
<evidence type="ECO:0000255" key="1">
    <source>
        <dbReference type="HAMAP-Rule" id="MF_01210"/>
    </source>
</evidence>
<reference key="1">
    <citation type="journal article" date="2010" name="Genome Biol.">
        <title>Structure and dynamics of the pan-genome of Streptococcus pneumoniae and closely related species.</title>
        <authorList>
            <person name="Donati C."/>
            <person name="Hiller N.L."/>
            <person name="Tettelin H."/>
            <person name="Muzzi A."/>
            <person name="Croucher N.J."/>
            <person name="Angiuoli S.V."/>
            <person name="Oggioni M."/>
            <person name="Dunning Hotopp J.C."/>
            <person name="Hu F.Z."/>
            <person name="Riley D.R."/>
            <person name="Covacci A."/>
            <person name="Mitchell T.J."/>
            <person name="Bentley S.D."/>
            <person name="Kilian M."/>
            <person name="Ehrlich G.D."/>
            <person name="Rappuoli R."/>
            <person name="Moxon E.R."/>
            <person name="Masignani V."/>
        </authorList>
    </citation>
    <scope>NUCLEOTIDE SEQUENCE [LARGE SCALE GENOMIC DNA]</scope>
    <source>
        <strain>P1031</strain>
    </source>
</reference>
<gene>
    <name evidence="1" type="primary">carB</name>
    <name type="ordered locus">SPP_1313</name>
</gene>
<dbReference type="EC" id="6.3.4.16" evidence="1"/>
<dbReference type="EC" id="6.3.5.5" evidence="1"/>
<dbReference type="EMBL" id="CP000920">
    <property type="protein sequence ID" value="ACO21160.1"/>
    <property type="molecule type" value="Genomic_DNA"/>
</dbReference>
<dbReference type="RefSeq" id="WP_001126437.1">
    <property type="nucleotide sequence ID" value="NC_012467.1"/>
</dbReference>
<dbReference type="SMR" id="C1CL09"/>
<dbReference type="KEGG" id="spp:SPP_1313"/>
<dbReference type="HOGENOM" id="CLU_000513_1_2_9"/>
<dbReference type="UniPathway" id="UPA00068">
    <property type="reaction ID" value="UER00171"/>
</dbReference>
<dbReference type="UniPathway" id="UPA00070">
    <property type="reaction ID" value="UER00115"/>
</dbReference>
<dbReference type="GO" id="GO:0005737">
    <property type="term" value="C:cytoplasm"/>
    <property type="evidence" value="ECO:0007669"/>
    <property type="project" value="TreeGrafter"/>
</dbReference>
<dbReference type="GO" id="GO:0005524">
    <property type="term" value="F:ATP binding"/>
    <property type="evidence" value="ECO:0007669"/>
    <property type="project" value="UniProtKB-UniRule"/>
</dbReference>
<dbReference type="GO" id="GO:0004087">
    <property type="term" value="F:carbamoyl-phosphate synthase (ammonia) activity"/>
    <property type="evidence" value="ECO:0007669"/>
    <property type="project" value="RHEA"/>
</dbReference>
<dbReference type="GO" id="GO:0004088">
    <property type="term" value="F:carbamoyl-phosphate synthase (glutamine-hydrolyzing) activity"/>
    <property type="evidence" value="ECO:0007669"/>
    <property type="project" value="UniProtKB-UniRule"/>
</dbReference>
<dbReference type="GO" id="GO:0046872">
    <property type="term" value="F:metal ion binding"/>
    <property type="evidence" value="ECO:0007669"/>
    <property type="project" value="UniProtKB-KW"/>
</dbReference>
<dbReference type="GO" id="GO:0044205">
    <property type="term" value="P:'de novo' UMP biosynthetic process"/>
    <property type="evidence" value="ECO:0007669"/>
    <property type="project" value="UniProtKB-UniRule"/>
</dbReference>
<dbReference type="GO" id="GO:0006541">
    <property type="term" value="P:glutamine metabolic process"/>
    <property type="evidence" value="ECO:0007669"/>
    <property type="project" value="TreeGrafter"/>
</dbReference>
<dbReference type="GO" id="GO:0006526">
    <property type="term" value="P:L-arginine biosynthetic process"/>
    <property type="evidence" value="ECO:0007669"/>
    <property type="project" value="UniProtKB-UniRule"/>
</dbReference>
<dbReference type="CDD" id="cd01424">
    <property type="entry name" value="MGS_CPS_II"/>
    <property type="match status" value="1"/>
</dbReference>
<dbReference type="FunFam" id="1.10.1030.10:FF:000002">
    <property type="entry name" value="Carbamoyl-phosphate synthase large chain"/>
    <property type="match status" value="1"/>
</dbReference>
<dbReference type="FunFam" id="3.30.1490.20:FF:000001">
    <property type="entry name" value="Carbamoyl-phosphate synthase large chain"/>
    <property type="match status" value="1"/>
</dbReference>
<dbReference type="FunFam" id="3.30.470.20:FF:000001">
    <property type="entry name" value="Carbamoyl-phosphate synthase large chain"/>
    <property type="match status" value="1"/>
</dbReference>
<dbReference type="FunFam" id="3.30.470.20:FF:000026">
    <property type="entry name" value="Carbamoyl-phosphate synthase large chain"/>
    <property type="match status" value="1"/>
</dbReference>
<dbReference type="FunFam" id="3.40.50.1380:FF:000017">
    <property type="entry name" value="Carbamoyl-phosphate synthase large chain"/>
    <property type="match status" value="1"/>
</dbReference>
<dbReference type="FunFam" id="3.40.50.20:FF:000001">
    <property type="entry name" value="Carbamoyl-phosphate synthase large chain"/>
    <property type="match status" value="2"/>
</dbReference>
<dbReference type="Gene3D" id="3.40.50.20">
    <property type="match status" value="2"/>
</dbReference>
<dbReference type="Gene3D" id="3.30.1490.20">
    <property type="entry name" value="ATP-grasp fold, A domain"/>
    <property type="match status" value="1"/>
</dbReference>
<dbReference type="Gene3D" id="3.30.470.20">
    <property type="entry name" value="ATP-grasp fold, B domain"/>
    <property type="match status" value="2"/>
</dbReference>
<dbReference type="Gene3D" id="1.10.1030.10">
    <property type="entry name" value="Carbamoyl-phosphate synthetase, large subunit oligomerisation domain"/>
    <property type="match status" value="1"/>
</dbReference>
<dbReference type="Gene3D" id="3.40.50.1380">
    <property type="entry name" value="Methylglyoxal synthase-like domain"/>
    <property type="match status" value="1"/>
</dbReference>
<dbReference type="HAMAP" id="MF_01210_A">
    <property type="entry name" value="CPSase_L_chain_A"/>
    <property type="match status" value="1"/>
</dbReference>
<dbReference type="HAMAP" id="MF_01210_B">
    <property type="entry name" value="CPSase_L_chain_B"/>
    <property type="match status" value="1"/>
</dbReference>
<dbReference type="InterPro" id="IPR011761">
    <property type="entry name" value="ATP-grasp"/>
</dbReference>
<dbReference type="InterPro" id="IPR013815">
    <property type="entry name" value="ATP_grasp_subdomain_1"/>
</dbReference>
<dbReference type="InterPro" id="IPR006275">
    <property type="entry name" value="CarbamoylP_synth_lsu"/>
</dbReference>
<dbReference type="InterPro" id="IPR005480">
    <property type="entry name" value="CarbamoylP_synth_lsu_oligo"/>
</dbReference>
<dbReference type="InterPro" id="IPR036897">
    <property type="entry name" value="CarbamoylP_synth_lsu_oligo_sf"/>
</dbReference>
<dbReference type="InterPro" id="IPR005479">
    <property type="entry name" value="CbamoylP_synth_lsu-like_ATP-bd"/>
</dbReference>
<dbReference type="InterPro" id="IPR005483">
    <property type="entry name" value="CbamoylP_synth_lsu_CPSase_dom"/>
</dbReference>
<dbReference type="InterPro" id="IPR011607">
    <property type="entry name" value="MGS-like_dom"/>
</dbReference>
<dbReference type="InterPro" id="IPR036914">
    <property type="entry name" value="MGS-like_dom_sf"/>
</dbReference>
<dbReference type="InterPro" id="IPR033937">
    <property type="entry name" value="MGS_CPS_CarB"/>
</dbReference>
<dbReference type="InterPro" id="IPR016185">
    <property type="entry name" value="PreATP-grasp_dom_sf"/>
</dbReference>
<dbReference type="NCBIfam" id="TIGR01369">
    <property type="entry name" value="CPSaseII_lrg"/>
    <property type="match status" value="1"/>
</dbReference>
<dbReference type="NCBIfam" id="NF003671">
    <property type="entry name" value="PRK05294.1"/>
    <property type="match status" value="1"/>
</dbReference>
<dbReference type="NCBIfam" id="NF009455">
    <property type="entry name" value="PRK12815.1"/>
    <property type="match status" value="1"/>
</dbReference>
<dbReference type="PANTHER" id="PTHR11405:SF53">
    <property type="entry name" value="CARBAMOYL-PHOSPHATE SYNTHASE [AMMONIA], MITOCHONDRIAL"/>
    <property type="match status" value="1"/>
</dbReference>
<dbReference type="PANTHER" id="PTHR11405">
    <property type="entry name" value="CARBAMOYLTRANSFERASE FAMILY MEMBER"/>
    <property type="match status" value="1"/>
</dbReference>
<dbReference type="Pfam" id="PF02786">
    <property type="entry name" value="CPSase_L_D2"/>
    <property type="match status" value="2"/>
</dbReference>
<dbReference type="Pfam" id="PF02787">
    <property type="entry name" value="CPSase_L_D3"/>
    <property type="match status" value="1"/>
</dbReference>
<dbReference type="Pfam" id="PF02142">
    <property type="entry name" value="MGS"/>
    <property type="match status" value="1"/>
</dbReference>
<dbReference type="PRINTS" id="PR00098">
    <property type="entry name" value="CPSASE"/>
</dbReference>
<dbReference type="SMART" id="SM01096">
    <property type="entry name" value="CPSase_L_D3"/>
    <property type="match status" value="1"/>
</dbReference>
<dbReference type="SMART" id="SM01209">
    <property type="entry name" value="GARS_A"/>
    <property type="match status" value="1"/>
</dbReference>
<dbReference type="SMART" id="SM00851">
    <property type="entry name" value="MGS"/>
    <property type="match status" value="1"/>
</dbReference>
<dbReference type="SUPFAM" id="SSF48108">
    <property type="entry name" value="Carbamoyl phosphate synthetase, large subunit connection domain"/>
    <property type="match status" value="1"/>
</dbReference>
<dbReference type="SUPFAM" id="SSF56059">
    <property type="entry name" value="Glutathione synthetase ATP-binding domain-like"/>
    <property type="match status" value="2"/>
</dbReference>
<dbReference type="SUPFAM" id="SSF52335">
    <property type="entry name" value="Methylglyoxal synthase-like"/>
    <property type="match status" value="1"/>
</dbReference>
<dbReference type="SUPFAM" id="SSF52440">
    <property type="entry name" value="PreATP-grasp domain"/>
    <property type="match status" value="2"/>
</dbReference>
<dbReference type="PROSITE" id="PS50975">
    <property type="entry name" value="ATP_GRASP"/>
    <property type="match status" value="2"/>
</dbReference>
<dbReference type="PROSITE" id="PS00866">
    <property type="entry name" value="CPSASE_1"/>
    <property type="match status" value="2"/>
</dbReference>
<dbReference type="PROSITE" id="PS00867">
    <property type="entry name" value="CPSASE_2"/>
    <property type="match status" value="2"/>
</dbReference>
<dbReference type="PROSITE" id="PS51855">
    <property type="entry name" value="MGS"/>
    <property type="match status" value="1"/>
</dbReference>
<accession>C1CL09</accession>
<name>CARB_STRZP</name>
<feature type="chain" id="PRO_1000164720" description="Carbamoyl phosphate synthase large chain">
    <location>
        <begin position="1"/>
        <end position="1058"/>
    </location>
</feature>
<feature type="domain" description="ATP-grasp 1" evidence="1">
    <location>
        <begin position="133"/>
        <end position="327"/>
    </location>
</feature>
<feature type="domain" description="ATP-grasp 2" evidence="1">
    <location>
        <begin position="671"/>
        <end position="861"/>
    </location>
</feature>
<feature type="domain" description="MGS-like" evidence="1">
    <location>
        <begin position="930"/>
        <end position="1058"/>
    </location>
</feature>
<feature type="region of interest" description="Carboxyphosphate synthetic domain" evidence="1">
    <location>
        <begin position="1"/>
        <end position="401"/>
    </location>
</feature>
<feature type="region of interest" description="Oligomerization domain" evidence="1">
    <location>
        <begin position="402"/>
        <end position="546"/>
    </location>
</feature>
<feature type="region of interest" description="Carbamoyl phosphate synthetic domain" evidence="1">
    <location>
        <begin position="547"/>
        <end position="929"/>
    </location>
</feature>
<feature type="region of interest" description="Allosteric domain" evidence="1">
    <location>
        <begin position="930"/>
        <end position="1058"/>
    </location>
</feature>
<feature type="binding site" evidence="1">
    <location>
        <position position="129"/>
    </location>
    <ligand>
        <name>ATP</name>
        <dbReference type="ChEBI" id="CHEBI:30616"/>
        <label>1</label>
    </ligand>
</feature>
<feature type="binding site" evidence="1">
    <location>
        <position position="169"/>
    </location>
    <ligand>
        <name>ATP</name>
        <dbReference type="ChEBI" id="CHEBI:30616"/>
        <label>1</label>
    </ligand>
</feature>
<feature type="binding site" evidence="1">
    <location>
        <position position="175"/>
    </location>
    <ligand>
        <name>ATP</name>
        <dbReference type="ChEBI" id="CHEBI:30616"/>
        <label>1</label>
    </ligand>
</feature>
<feature type="binding site" evidence="1">
    <location>
        <position position="176"/>
    </location>
    <ligand>
        <name>ATP</name>
        <dbReference type="ChEBI" id="CHEBI:30616"/>
        <label>1</label>
    </ligand>
</feature>
<feature type="binding site" evidence="1">
    <location>
        <position position="208"/>
    </location>
    <ligand>
        <name>ATP</name>
        <dbReference type="ChEBI" id="CHEBI:30616"/>
        <label>1</label>
    </ligand>
</feature>
<feature type="binding site" evidence="1">
    <location>
        <position position="210"/>
    </location>
    <ligand>
        <name>ATP</name>
        <dbReference type="ChEBI" id="CHEBI:30616"/>
        <label>1</label>
    </ligand>
</feature>
<feature type="binding site" evidence="1">
    <location>
        <position position="215"/>
    </location>
    <ligand>
        <name>ATP</name>
        <dbReference type="ChEBI" id="CHEBI:30616"/>
        <label>1</label>
    </ligand>
</feature>
<feature type="binding site" evidence="1">
    <location>
        <position position="241"/>
    </location>
    <ligand>
        <name>ATP</name>
        <dbReference type="ChEBI" id="CHEBI:30616"/>
        <label>1</label>
    </ligand>
</feature>
<feature type="binding site" evidence="1">
    <location>
        <position position="242"/>
    </location>
    <ligand>
        <name>ATP</name>
        <dbReference type="ChEBI" id="CHEBI:30616"/>
        <label>1</label>
    </ligand>
</feature>
<feature type="binding site" evidence="1">
    <location>
        <position position="243"/>
    </location>
    <ligand>
        <name>ATP</name>
        <dbReference type="ChEBI" id="CHEBI:30616"/>
        <label>1</label>
    </ligand>
</feature>
<feature type="binding site" evidence="1">
    <location>
        <position position="284"/>
    </location>
    <ligand>
        <name>ATP</name>
        <dbReference type="ChEBI" id="CHEBI:30616"/>
        <label>1</label>
    </ligand>
</feature>
<feature type="binding site" evidence="1">
    <location>
        <position position="284"/>
    </location>
    <ligand>
        <name>Mg(2+)</name>
        <dbReference type="ChEBI" id="CHEBI:18420"/>
        <label>1</label>
    </ligand>
</feature>
<feature type="binding site" evidence="1">
    <location>
        <position position="284"/>
    </location>
    <ligand>
        <name>Mn(2+)</name>
        <dbReference type="ChEBI" id="CHEBI:29035"/>
        <label>1</label>
    </ligand>
</feature>
<feature type="binding site" evidence="1">
    <location>
        <position position="298"/>
    </location>
    <ligand>
        <name>ATP</name>
        <dbReference type="ChEBI" id="CHEBI:30616"/>
        <label>1</label>
    </ligand>
</feature>
<feature type="binding site" evidence="1">
    <location>
        <position position="298"/>
    </location>
    <ligand>
        <name>Mg(2+)</name>
        <dbReference type="ChEBI" id="CHEBI:18420"/>
        <label>1</label>
    </ligand>
</feature>
<feature type="binding site" evidence="1">
    <location>
        <position position="298"/>
    </location>
    <ligand>
        <name>Mg(2+)</name>
        <dbReference type="ChEBI" id="CHEBI:18420"/>
        <label>2</label>
    </ligand>
</feature>
<feature type="binding site" evidence="1">
    <location>
        <position position="298"/>
    </location>
    <ligand>
        <name>Mn(2+)</name>
        <dbReference type="ChEBI" id="CHEBI:29035"/>
        <label>1</label>
    </ligand>
</feature>
<feature type="binding site" evidence="1">
    <location>
        <position position="298"/>
    </location>
    <ligand>
        <name>Mn(2+)</name>
        <dbReference type="ChEBI" id="CHEBI:29035"/>
        <label>2</label>
    </ligand>
</feature>
<feature type="binding site" evidence="1">
    <location>
        <position position="300"/>
    </location>
    <ligand>
        <name>Mg(2+)</name>
        <dbReference type="ChEBI" id="CHEBI:18420"/>
        <label>2</label>
    </ligand>
</feature>
<feature type="binding site" evidence="1">
    <location>
        <position position="300"/>
    </location>
    <ligand>
        <name>Mn(2+)</name>
        <dbReference type="ChEBI" id="CHEBI:29035"/>
        <label>2</label>
    </ligand>
</feature>
<feature type="binding site" evidence="1">
    <location>
        <position position="707"/>
    </location>
    <ligand>
        <name>ATP</name>
        <dbReference type="ChEBI" id="CHEBI:30616"/>
        <label>2</label>
    </ligand>
</feature>
<feature type="binding site" evidence="1">
    <location>
        <position position="746"/>
    </location>
    <ligand>
        <name>ATP</name>
        <dbReference type="ChEBI" id="CHEBI:30616"/>
        <label>2</label>
    </ligand>
</feature>
<feature type="binding site" evidence="1">
    <location>
        <position position="748"/>
    </location>
    <ligand>
        <name>ATP</name>
        <dbReference type="ChEBI" id="CHEBI:30616"/>
        <label>2</label>
    </ligand>
</feature>
<feature type="binding site" evidence="1">
    <location>
        <position position="752"/>
    </location>
    <ligand>
        <name>ATP</name>
        <dbReference type="ChEBI" id="CHEBI:30616"/>
        <label>2</label>
    </ligand>
</feature>
<feature type="binding site" evidence="1">
    <location>
        <position position="777"/>
    </location>
    <ligand>
        <name>ATP</name>
        <dbReference type="ChEBI" id="CHEBI:30616"/>
        <label>2</label>
    </ligand>
</feature>
<feature type="binding site" evidence="1">
    <location>
        <position position="778"/>
    </location>
    <ligand>
        <name>ATP</name>
        <dbReference type="ChEBI" id="CHEBI:30616"/>
        <label>2</label>
    </ligand>
</feature>
<feature type="binding site" evidence="1">
    <location>
        <position position="779"/>
    </location>
    <ligand>
        <name>ATP</name>
        <dbReference type="ChEBI" id="CHEBI:30616"/>
        <label>2</label>
    </ligand>
</feature>
<feature type="binding site" evidence="1">
    <location>
        <position position="780"/>
    </location>
    <ligand>
        <name>ATP</name>
        <dbReference type="ChEBI" id="CHEBI:30616"/>
        <label>2</label>
    </ligand>
</feature>
<feature type="binding site" evidence="1">
    <location>
        <position position="820"/>
    </location>
    <ligand>
        <name>ATP</name>
        <dbReference type="ChEBI" id="CHEBI:30616"/>
        <label>2</label>
    </ligand>
</feature>
<feature type="binding site" evidence="1">
    <location>
        <position position="820"/>
    </location>
    <ligand>
        <name>Mg(2+)</name>
        <dbReference type="ChEBI" id="CHEBI:18420"/>
        <label>3</label>
    </ligand>
</feature>
<feature type="binding site" evidence="1">
    <location>
        <position position="820"/>
    </location>
    <ligand>
        <name>Mn(2+)</name>
        <dbReference type="ChEBI" id="CHEBI:29035"/>
        <label>3</label>
    </ligand>
</feature>
<feature type="binding site" evidence="1">
    <location>
        <position position="832"/>
    </location>
    <ligand>
        <name>ATP</name>
        <dbReference type="ChEBI" id="CHEBI:30616"/>
        <label>2</label>
    </ligand>
</feature>
<feature type="binding site" evidence="1">
    <location>
        <position position="832"/>
    </location>
    <ligand>
        <name>Mg(2+)</name>
        <dbReference type="ChEBI" id="CHEBI:18420"/>
        <label>3</label>
    </ligand>
</feature>
<feature type="binding site" evidence="1">
    <location>
        <position position="832"/>
    </location>
    <ligand>
        <name>Mg(2+)</name>
        <dbReference type="ChEBI" id="CHEBI:18420"/>
        <label>4</label>
    </ligand>
</feature>
<feature type="binding site" evidence="1">
    <location>
        <position position="832"/>
    </location>
    <ligand>
        <name>Mn(2+)</name>
        <dbReference type="ChEBI" id="CHEBI:29035"/>
        <label>3</label>
    </ligand>
</feature>
<feature type="binding site" evidence="1">
    <location>
        <position position="832"/>
    </location>
    <ligand>
        <name>Mn(2+)</name>
        <dbReference type="ChEBI" id="CHEBI:29035"/>
        <label>4</label>
    </ligand>
</feature>
<feature type="binding site" evidence="1">
    <location>
        <position position="834"/>
    </location>
    <ligand>
        <name>Mg(2+)</name>
        <dbReference type="ChEBI" id="CHEBI:18420"/>
        <label>4</label>
    </ligand>
</feature>
<feature type="binding site" evidence="1">
    <location>
        <position position="834"/>
    </location>
    <ligand>
        <name>Mn(2+)</name>
        <dbReference type="ChEBI" id="CHEBI:29035"/>
        <label>4</label>
    </ligand>
</feature>
<comment type="function">
    <text evidence="1">Large subunit of the glutamine-dependent carbamoyl phosphate synthetase (CPSase). CPSase catalyzes the formation of carbamoyl phosphate from the ammonia moiety of glutamine, carbonate, and phosphate donated by ATP, constituting the first step of 2 biosynthetic pathways, one leading to arginine and/or urea and the other to pyrimidine nucleotides. The large subunit (synthetase) binds the substrates ammonia (free or transferred from glutamine from the small subunit), hydrogencarbonate and ATP and carries out an ATP-coupled ligase reaction, activating hydrogencarbonate by forming carboxy phosphate which reacts with ammonia to form carbamoyl phosphate.</text>
</comment>
<comment type="catalytic activity">
    <reaction evidence="1">
        <text>hydrogencarbonate + L-glutamine + 2 ATP + H2O = carbamoyl phosphate + L-glutamate + 2 ADP + phosphate + 2 H(+)</text>
        <dbReference type="Rhea" id="RHEA:18633"/>
        <dbReference type="ChEBI" id="CHEBI:15377"/>
        <dbReference type="ChEBI" id="CHEBI:15378"/>
        <dbReference type="ChEBI" id="CHEBI:17544"/>
        <dbReference type="ChEBI" id="CHEBI:29985"/>
        <dbReference type="ChEBI" id="CHEBI:30616"/>
        <dbReference type="ChEBI" id="CHEBI:43474"/>
        <dbReference type="ChEBI" id="CHEBI:58228"/>
        <dbReference type="ChEBI" id="CHEBI:58359"/>
        <dbReference type="ChEBI" id="CHEBI:456216"/>
        <dbReference type="EC" id="6.3.5.5"/>
    </reaction>
</comment>
<comment type="catalytic activity">
    <molecule>Carbamoyl phosphate synthase large chain</molecule>
    <reaction evidence="1">
        <text>hydrogencarbonate + NH4(+) + 2 ATP = carbamoyl phosphate + 2 ADP + phosphate + 2 H(+)</text>
        <dbReference type="Rhea" id="RHEA:18029"/>
        <dbReference type="ChEBI" id="CHEBI:15378"/>
        <dbReference type="ChEBI" id="CHEBI:17544"/>
        <dbReference type="ChEBI" id="CHEBI:28938"/>
        <dbReference type="ChEBI" id="CHEBI:30616"/>
        <dbReference type="ChEBI" id="CHEBI:43474"/>
        <dbReference type="ChEBI" id="CHEBI:58228"/>
        <dbReference type="ChEBI" id="CHEBI:456216"/>
        <dbReference type="EC" id="6.3.4.16"/>
    </reaction>
</comment>
<comment type="cofactor">
    <cofactor evidence="1">
        <name>Mg(2+)</name>
        <dbReference type="ChEBI" id="CHEBI:18420"/>
    </cofactor>
    <cofactor evidence="1">
        <name>Mn(2+)</name>
        <dbReference type="ChEBI" id="CHEBI:29035"/>
    </cofactor>
    <text evidence="1">Binds 4 Mg(2+) or Mn(2+) ions per subunit.</text>
</comment>
<comment type="pathway">
    <text evidence="1">Amino-acid biosynthesis; L-arginine biosynthesis; carbamoyl phosphate from bicarbonate: step 1/1.</text>
</comment>
<comment type="pathway">
    <text evidence="1">Pyrimidine metabolism; UMP biosynthesis via de novo pathway; (S)-dihydroorotate from bicarbonate: step 1/3.</text>
</comment>
<comment type="subunit">
    <text evidence="1">Composed of two chains; the small (or glutamine) chain promotes the hydrolysis of glutamine to ammonia, which is used by the large (or ammonia) chain to synthesize carbamoyl phosphate. Tetramer of heterodimers (alpha,beta)4.</text>
</comment>
<comment type="domain">
    <text evidence="1">The large subunit is composed of 2 ATP-grasp domains that are involved in binding the 2 ATP molecules needed for carbamoyl phosphate synthesis. The N-terminal ATP-grasp domain (referred to as the carboxyphosphate synthetic component) catalyzes the ATP-dependent phosphorylation of hydrogencarbonate to carboxyphosphate and the subsequent nucleophilic attack by ammonia to form a carbamate intermediate. The C-terminal ATP-grasp domain (referred to as the carbamoyl phosphate synthetic component) then catalyzes the phosphorylation of carbamate with the second ATP to form the end product carbamoyl phosphate. The reactive and unstable enzyme intermediates are sequentially channeled from one active site to the next through the interior of the protein over a distance of at least 96 A.</text>
</comment>
<comment type="similarity">
    <text evidence="1">Belongs to the CarB family.</text>
</comment>
<proteinExistence type="inferred from homology"/>
<keyword id="KW-0028">Amino-acid biosynthesis</keyword>
<keyword id="KW-0055">Arginine biosynthesis</keyword>
<keyword id="KW-0067">ATP-binding</keyword>
<keyword id="KW-0436">Ligase</keyword>
<keyword id="KW-0460">Magnesium</keyword>
<keyword id="KW-0464">Manganese</keyword>
<keyword id="KW-0479">Metal-binding</keyword>
<keyword id="KW-0547">Nucleotide-binding</keyword>
<keyword id="KW-0665">Pyrimidine biosynthesis</keyword>
<keyword id="KW-0677">Repeat</keyword>
<sequence>MPKRTDIQKIMVIGSGPIIIGQAAEFDYAGTQACLSLKEEGYEVVLVNSNPATIMTDKEIADKVYIEPITLEFVTRILRKERPDALLPTLGGQTGLNMAMELSKNGILDELSVELLGTKLSAIDQAEDRDLFKQLMEELEQPIPESEIVNTVEEAVAFAATIGYPVIVRPAFTLGGTGGGMCANEKELREITENGLKLSPVTQCLIERSIAGFKEIEYEVMRDSADNALVVCNMENFDPVGIHTGDSIVFAPAQTMSDYENQMLRDASLSIIRALKIEGGCNVQLALDPNSFKYYVIEVNPRVSRSSALASKATGYPIAKLAAKIAVGLTLDEVINPVTGSTYAMFEPALDYVVAKIPRFPFDKFEKGERRLGTQMKATGEVMAIGRNIEESLLKACRSLEIGVHHNEIPELAAVSDDALIEKVVKAQDDRLFYVSEAIRRGYTPEEIAELTKIDIFYLDKLLHIFEIEQELGAHPQDLEVLKTAKLNGFSDRKIAELWGTTDDKVRQLRLENKIVPVYKMVDTCAAEFDSETPYFYSTYGWENESIRSDKESVLVLGSGPIRIGQGVEFDYATVHSVKAIQAAGYEAIIMNSNPETVSTDFSVSDKLYFEPLTFEDVMNVIDLEQPKGVIVQFGGQTAINLAEPLAKAGVTILGTQVADLDRAEDRDLFEQALKELDIPQPPGQTATNEEEAALAARKIGFPVLVRPSYVLGGRAMEIVENEEDLRSYMRTAVKASPDHPVLVDSYIVGQECEVDAISDGKDVLIPGIMEHIERAGVHSGDSMAVYPPQTLSQKVQETIADYTKRLAIGLHCLGMMNIQFVIKDEKVYVIEVNPRASRTVPFLSKVTNIPMAQVATKLILGQSLSELGYQNGLYPESTRVHIKAPVFSFTKLAKVDSLLGPEMKSTGEVMGSDATLEKALYKAFEASYLHLPTFGNVVFTIADDAKEEALNLARRFQNIGYGILATEGTAAFFASHGLQAQPVGKIGDDDKDIPSFVRKGRIQAIINTVGTKRTADEDGEQIRRSAIEHGVPLFTALDTANAMLKVLESRSFVTEAI</sequence>